<evidence type="ECO:0000255" key="1">
    <source>
        <dbReference type="HAMAP-Rule" id="MF_01101"/>
    </source>
</evidence>
<gene>
    <name type="ordered locus">VS_0999</name>
</gene>
<sequence>MSNRVGLASSLKDGQKYMDLWPVRKELNSIFPEQRIIKATRFGVKVMPAIAAISVLTQMVFNNYQAMPQAVVMALFAISLPLQGMWWLGNRSNTKLPPALVSWYRELHEKITETGFALEPMKSRPRYKELAIILNRAFRQLDKSSMERWF</sequence>
<organism>
    <name type="scientific">Vibrio atlanticus (strain LGP32)</name>
    <name type="common">Vibrio splendidus (strain Mel32)</name>
    <dbReference type="NCBI Taxonomy" id="575788"/>
    <lineage>
        <taxon>Bacteria</taxon>
        <taxon>Pseudomonadati</taxon>
        <taxon>Pseudomonadota</taxon>
        <taxon>Gammaproteobacteria</taxon>
        <taxon>Vibrionales</taxon>
        <taxon>Vibrionaceae</taxon>
        <taxon>Vibrio</taxon>
    </lineage>
</organism>
<protein>
    <recommendedName>
        <fullName evidence="1">UPF0208 membrane protein VS_0999</fullName>
    </recommendedName>
</protein>
<feature type="chain" id="PRO_1000149903" description="UPF0208 membrane protein VS_0999">
    <location>
        <begin position="1"/>
        <end position="150"/>
    </location>
</feature>
<feature type="transmembrane region" description="Helical" evidence="1">
    <location>
        <begin position="42"/>
        <end position="62"/>
    </location>
</feature>
<feature type="transmembrane region" description="Helical" evidence="1">
    <location>
        <begin position="70"/>
        <end position="90"/>
    </location>
</feature>
<proteinExistence type="inferred from homology"/>
<dbReference type="EMBL" id="FM954972">
    <property type="protein sequence ID" value="CAV18047.1"/>
    <property type="molecule type" value="Genomic_DNA"/>
</dbReference>
<dbReference type="SMR" id="B7VLV8"/>
<dbReference type="STRING" id="575788.VS_0999"/>
<dbReference type="KEGG" id="vsp:VS_0999"/>
<dbReference type="eggNOG" id="COG3092">
    <property type="taxonomic scope" value="Bacteria"/>
</dbReference>
<dbReference type="HOGENOM" id="CLU_128746_0_0_6"/>
<dbReference type="Proteomes" id="UP000009100">
    <property type="component" value="Chromosome 1"/>
</dbReference>
<dbReference type="GO" id="GO:0005886">
    <property type="term" value="C:plasma membrane"/>
    <property type="evidence" value="ECO:0007669"/>
    <property type="project" value="UniProtKB-SubCell"/>
</dbReference>
<dbReference type="HAMAP" id="MF_01101">
    <property type="entry name" value="UPF0208"/>
    <property type="match status" value="1"/>
</dbReference>
<dbReference type="InterPro" id="IPR007334">
    <property type="entry name" value="UPF0208"/>
</dbReference>
<dbReference type="NCBIfam" id="NF002493">
    <property type="entry name" value="PRK01816.1"/>
    <property type="match status" value="1"/>
</dbReference>
<dbReference type="Pfam" id="PF04217">
    <property type="entry name" value="DUF412"/>
    <property type="match status" value="1"/>
</dbReference>
<keyword id="KW-0997">Cell inner membrane</keyword>
<keyword id="KW-1003">Cell membrane</keyword>
<keyword id="KW-0472">Membrane</keyword>
<keyword id="KW-0812">Transmembrane</keyword>
<keyword id="KW-1133">Transmembrane helix</keyword>
<name>Y999_VIBA3</name>
<reference key="1">
    <citation type="submission" date="2009-02" db="EMBL/GenBank/DDBJ databases">
        <title>Vibrio splendidus str. LGP32 complete genome.</title>
        <authorList>
            <person name="Mazel D."/>
            <person name="Le Roux F."/>
        </authorList>
    </citation>
    <scope>NUCLEOTIDE SEQUENCE [LARGE SCALE GENOMIC DNA]</scope>
    <source>
        <strain>LGP32</strain>
    </source>
</reference>
<comment type="subcellular location">
    <subcellularLocation>
        <location evidence="1">Cell inner membrane</location>
        <topology evidence="1">Multi-pass membrane protein</topology>
    </subcellularLocation>
</comment>
<comment type="similarity">
    <text evidence="1">Belongs to the UPF0208 family.</text>
</comment>
<accession>B7VLV8</accession>